<comment type="function">
    <text evidence="1">Involved in the control of energetic metabolism and significantly contribute to cell fitness, especially under respiratory growth conditions.</text>
</comment>
<comment type="subcellular location">
    <subcellularLocation>
        <location evidence="1">Cytoplasm</location>
    </subcellularLocation>
</comment>
<comment type="similarity">
    <text evidence="2">Belongs to the RGI1 family.</text>
</comment>
<evidence type="ECO:0000250" key="1"/>
<evidence type="ECO:0000305" key="2"/>
<feature type="chain" id="PRO_0000402300" description="Respiratory growth induced protein 2">
    <location>
        <begin position="1"/>
        <end position="164"/>
    </location>
</feature>
<name>RGI2_YEAS2</name>
<gene>
    <name type="primary">RGI2</name>
    <name type="ORF">C1Q_04626</name>
</gene>
<reference key="1">
    <citation type="journal article" date="2009" name="Genome Res.">
        <title>Genome structure of a Saccharomyces cerevisiae strain widely used in bioethanol production.</title>
        <authorList>
            <person name="Argueso J.L."/>
            <person name="Carazzolle M.F."/>
            <person name="Mieczkowski P.A."/>
            <person name="Duarte F.M."/>
            <person name="Netto O.V.C."/>
            <person name="Missawa S.K."/>
            <person name="Galzerani F."/>
            <person name="Costa G.G.L."/>
            <person name="Vidal R.O."/>
            <person name="Noronha M.F."/>
            <person name="Dominska M."/>
            <person name="Andrietta M.G.S."/>
            <person name="Andrietta S.R."/>
            <person name="Cunha A.F."/>
            <person name="Gomes L.H."/>
            <person name="Tavares F.C.A."/>
            <person name="Alcarde A.R."/>
            <person name="Dietrich F.S."/>
            <person name="McCusker J.H."/>
            <person name="Petes T.D."/>
            <person name="Pereira G.A.G."/>
        </authorList>
    </citation>
    <scope>NUCLEOTIDE SEQUENCE [LARGE SCALE GENOMIC DNA]</scope>
    <source>
        <strain>JAY291</strain>
    </source>
</reference>
<dbReference type="EMBL" id="ACFL01000365">
    <property type="protein sequence ID" value="EEU05037.1"/>
    <property type="molecule type" value="Genomic_DNA"/>
</dbReference>
<dbReference type="SMR" id="C7GVY4"/>
<dbReference type="Proteomes" id="UP000008073">
    <property type="component" value="Unassembled WGS sequence"/>
</dbReference>
<dbReference type="GO" id="GO:0005737">
    <property type="term" value="C:cytoplasm"/>
    <property type="evidence" value="ECO:0007669"/>
    <property type="project" value="UniProtKB-SubCell"/>
</dbReference>
<dbReference type="GO" id="GO:0006112">
    <property type="term" value="P:energy reserve metabolic process"/>
    <property type="evidence" value="ECO:0007669"/>
    <property type="project" value="InterPro"/>
</dbReference>
<dbReference type="FunFam" id="3.40.1000.40:FF:000001">
    <property type="entry name" value="Respiratory growth induced protein 2"/>
    <property type="match status" value="1"/>
</dbReference>
<dbReference type="Gene3D" id="3.40.1000.40">
    <property type="entry name" value="Respiratory growth induced protein 1"/>
    <property type="match status" value="1"/>
</dbReference>
<dbReference type="InterPro" id="IPR022554">
    <property type="entry name" value="RGI1"/>
</dbReference>
<dbReference type="InterPro" id="IPR038235">
    <property type="entry name" value="RGI1_sf"/>
</dbReference>
<dbReference type="Pfam" id="PF10843">
    <property type="entry name" value="RGI1"/>
    <property type="match status" value="1"/>
</dbReference>
<sequence>MTKKDKKAKGPKMSTITTKSGESLKVFEDLHDFETYLKGETEDQEFDHVHCQLKYYPPFVLHDAHDDPEKIKETANSHSKKFVRHLHQHVEKHLLKDIKTAINKPELKFHDKKKQESFDRIVWNYGEETELNAKKFKVSVEVVCKHDGAMVDVDYKTEPLQPLI</sequence>
<keyword id="KW-0963">Cytoplasm</keyword>
<organism>
    <name type="scientific">Saccharomyces cerevisiae (strain JAY291)</name>
    <name type="common">Baker's yeast</name>
    <dbReference type="NCBI Taxonomy" id="574961"/>
    <lineage>
        <taxon>Eukaryota</taxon>
        <taxon>Fungi</taxon>
        <taxon>Dikarya</taxon>
        <taxon>Ascomycota</taxon>
        <taxon>Saccharomycotina</taxon>
        <taxon>Saccharomycetes</taxon>
        <taxon>Saccharomycetales</taxon>
        <taxon>Saccharomycetaceae</taxon>
        <taxon>Saccharomyces</taxon>
    </lineage>
</organism>
<accession>C7GVY4</accession>
<proteinExistence type="inferred from homology"/>
<protein>
    <recommendedName>
        <fullName>Respiratory growth induced protein 2</fullName>
    </recommendedName>
</protein>